<protein>
    <recommendedName>
        <fullName evidence="1">Accessory gene regulator protein B</fullName>
        <ecNumber evidence="1">3.4.-.-</ecNumber>
    </recommendedName>
</protein>
<organism>
    <name type="scientific">Staphylococcus haemolyticus (strain JCSC1435)</name>
    <dbReference type="NCBI Taxonomy" id="279808"/>
    <lineage>
        <taxon>Bacteria</taxon>
        <taxon>Bacillati</taxon>
        <taxon>Bacillota</taxon>
        <taxon>Bacilli</taxon>
        <taxon>Bacillales</taxon>
        <taxon>Staphylococcaceae</taxon>
        <taxon>Staphylococcus</taxon>
    </lineage>
</organism>
<dbReference type="EC" id="3.4.-.-" evidence="1"/>
<dbReference type="EMBL" id="AP006716">
    <property type="protein sequence ID" value="BAE04305.1"/>
    <property type="molecule type" value="Genomic_DNA"/>
</dbReference>
<dbReference type="RefSeq" id="WP_011275304.1">
    <property type="nucleotide sequence ID" value="NC_007168.1"/>
</dbReference>
<dbReference type="SMR" id="Q4L7S0"/>
<dbReference type="MEROPS" id="C75.001"/>
<dbReference type="KEGG" id="sha:SH0996"/>
<dbReference type="eggNOG" id="COG4512">
    <property type="taxonomic scope" value="Bacteria"/>
</dbReference>
<dbReference type="HOGENOM" id="CLU_098969_2_2_9"/>
<dbReference type="OrthoDB" id="2183538at2"/>
<dbReference type="Proteomes" id="UP000000543">
    <property type="component" value="Chromosome"/>
</dbReference>
<dbReference type="GO" id="GO:0005886">
    <property type="term" value="C:plasma membrane"/>
    <property type="evidence" value="ECO:0007669"/>
    <property type="project" value="UniProtKB-SubCell"/>
</dbReference>
<dbReference type="GO" id="GO:0008233">
    <property type="term" value="F:peptidase activity"/>
    <property type="evidence" value="ECO:0007669"/>
    <property type="project" value="UniProtKB-UniRule"/>
</dbReference>
<dbReference type="GO" id="GO:0006508">
    <property type="term" value="P:proteolysis"/>
    <property type="evidence" value="ECO:0007669"/>
    <property type="project" value="UniProtKB-KW"/>
</dbReference>
<dbReference type="GO" id="GO:0009372">
    <property type="term" value="P:quorum sensing"/>
    <property type="evidence" value="ECO:0007669"/>
    <property type="project" value="UniProtKB-UniRule"/>
</dbReference>
<dbReference type="HAMAP" id="MF_00784">
    <property type="entry name" value="AgrB"/>
    <property type="match status" value="1"/>
</dbReference>
<dbReference type="InterPro" id="IPR006741">
    <property type="entry name" value="AgrB"/>
</dbReference>
<dbReference type="Pfam" id="PF04647">
    <property type="entry name" value="AgrB"/>
    <property type="match status" value="1"/>
</dbReference>
<dbReference type="SMART" id="SM00793">
    <property type="entry name" value="AgrB"/>
    <property type="match status" value="1"/>
</dbReference>
<proteinExistence type="inferred from homology"/>
<sequence>MKAIDNKIEQFALYLQRKNNLDHIQFLKVRLGLQVVVSNLAKTIVTYGVALIFHTFLYTLFTHVSYFLVRRYAHGAHAKSSLLCHVQNLALFVALPWLLVYFQVNLGIMYSVVAIGTVLIIYYAPSATKKQPIPSHLKMKKKLLSIIITMVLLIISFLAPEPFKQLILLGITLESITLLPIFFPREDN</sequence>
<reference key="1">
    <citation type="journal article" date="2005" name="J. Bacteriol.">
        <title>Whole-genome sequencing of Staphylococcus haemolyticus uncovers the extreme plasticity of its genome and the evolution of human-colonizing staphylococcal species.</title>
        <authorList>
            <person name="Takeuchi F."/>
            <person name="Watanabe S."/>
            <person name="Baba T."/>
            <person name="Yuzawa H."/>
            <person name="Ito T."/>
            <person name="Morimoto Y."/>
            <person name="Kuroda M."/>
            <person name="Cui L."/>
            <person name="Takahashi M."/>
            <person name="Ankai A."/>
            <person name="Baba S."/>
            <person name="Fukui S."/>
            <person name="Lee J.C."/>
            <person name="Hiramatsu K."/>
        </authorList>
    </citation>
    <scope>NUCLEOTIDE SEQUENCE [LARGE SCALE GENOMIC DNA]</scope>
    <source>
        <strain>JCSC1435</strain>
    </source>
</reference>
<comment type="function">
    <text evidence="1">Essential for the production of a quorum sensing system signal molecule, the autoinducing peptide (AIP). This quorum sensing system is responsible for the regulation of the expression of virulence factor genes. Involved in the proteolytic processing of AgrD, the precursor of AIP.</text>
</comment>
<comment type="subcellular location">
    <subcellularLocation>
        <location evidence="1">Cell membrane</location>
        <topology evidence="1">Multi-pass membrane protein</topology>
    </subcellularLocation>
</comment>
<comment type="similarity">
    <text evidence="1">Belongs to the AgrB family.</text>
</comment>
<accession>Q4L7S0</accession>
<gene>
    <name evidence="1" type="primary">agrB</name>
    <name type="ordered locus">SH0996</name>
</gene>
<feature type="chain" id="PRO_0000168129" description="Accessory gene regulator protein B">
    <location>
        <begin position="1"/>
        <end position="188"/>
    </location>
</feature>
<feature type="transmembrane region" description="Helical" evidence="1">
    <location>
        <begin position="49"/>
        <end position="69"/>
    </location>
</feature>
<feature type="transmembrane region" description="Helical" evidence="1">
    <location>
        <begin position="100"/>
        <end position="122"/>
    </location>
</feature>
<feature type="transmembrane region" description="Helical" evidence="1">
    <location>
        <begin position="143"/>
        <end position="163"/>
    </location>
</feature>
<feature type="transmembrane region" description="Helical" evidence="1">
    <location>
        <begin position="164"/>
        <end position="184"/>
    </location>
</feature>
<evidence type="ECO:0000255" key="1">
    <source>
        <dbReference type="HAMAP-Rule" id="MF_00784"/>
    </source>
</evidence>
<name>AGRB_STAHJ</name>
<keyword id="KW-1003">Cell membrane</keyword>
<keyword id="KW-0378">Hydrolase</keyword>
<keyword id="KW-0472">Membrane</keyword>
<keyword id="KW-0645">Protease</keyword>
<keyword id="KW-0673">Quorum sensing</keyword>
<keyword id="KW-0812">Transmembrane</keyword>
<keyword id="KW-1133">Transmembrane helix</keyword>
<keyword id="KW-0843">Virulence</keyword>